<comment type="function">
    <text evidence="2 3 6">Modulates calcium-dependent activity of inositol 1,4,5-triphosphate receptors (ITPRs). Inhibits agonist-induced intracellular calcium signaling (By similarity). Enhances inactivation and does not support calcium-dependent facilitation of voltage-dependent P/Q-type calcium channels (PubMed:11865310). Causes calcium-dependent facilitation and inhibits inactivation of L-type calcium channels by binding to the same sites as calmodulin in the C-terminal domain of CACNA1C, but has an opposite effect on channel function. Suppresses the calcium-dependent inactivation of CACNA1D. Inhibits TRPC5 channels. Prevents NMDA receptor-induced cellular degeneration. Required for the normal transfer of light signals through the retina (By similarity).</text>
</comment>
<comment type="subunit">
    <text evidence="2 3 6 8 9">Interacts with ITPR1, ITPR2 and ITPR3. The strength of this interaction inversely correlates with calcium concentration. Interacts with CACNA1A (via C-terminal CDB motif) in the pre- and postsynaptic membranes. Interacts with CACNA1C. Interacts with CACNA1D (By similarity). Interacts (via EF-hands 1 and 2) at microtubules with MAP1LC3B. Interacts (via EF-hands 1 and 2) with NSMF (via the central NLS-containing motif region), the interaction occurs in a calcium dependent manner after synaptic NMDA receptor stimulation and prevents nuclear import of NSMF. Interacts with MYO1C and TRPC5. Interacts with SPACA9 (By similarity).</text>
</comment>
<comment type="interaction">
    <interactant intactId="EBI-15688755">
        <id>O88751-1</id>
    </interactant>
    <interactant intactId="EBI-15688762">
        <id>Q9EPI6-1</id>
        <label>Nsmf</label>
    </interactant>
    <organismsDiffer>false</organismsDiffer>
    <experiments>4</experiments>
</comment>
<comment type="interaction">
    <interactant intactId="EBI-15688755">
        <id>O88751-1</id>
    </interactant>
    <interactant intactId="EBI-15688721">
        <id>Q99NF2-1</id>
        <label>Nsmf</label>
    </interactant>
    <organismsDiffer>true</organismsDiffer>
    <experiments>2</experiments>
</comment>
<comment type="subcellular location">
    <subcellularLocation>
        <location evidence="8">Cytoplasm</location>
    </subcellularLocation>
    <subcellularLocation>
        <location evidence="8">Cytoplasm</location>
        <location evidence="8">Cytoskeleton</location>
    </subcellularLocation>
    <text>Occurs in both the cytoplasmic and cytoskeletal compartment of cell somata and dendrites.</text>
</comment>
<comment type="alternative products">
    <event type="alternative splicing"/>
    <isoform>
        <id>O88751-1</id>
        <name>1</name>
        <sequence type="displayed"/>
    </isoform>
    <isoform>
        <id>O88751-2</id>
        <name>2</name>
        <name>Caldendrin-S1</name>
        <sequence type="described" ref="VSP_026157"/>
    </isoform>
    <isoform>
        <id>O88751-3</id>
        <name>3</name>
        <name>Caldendrin-S2</name>
        <sequence type="described" ref="VSP_026158"/>
    </isoform>
</comment>
<comment type="tissue specificity">
    <text evidence="7">Somatodendritic compartment of neurons (PubMed:11906216). Restricted expression in retina to a subpopulation of amacrine, bipolar, and ganglion cells (PubMed:11906216). According to PubMed:11906216, expression is heterogeneous within brain regions and their major cell types and does not match with those of marker proteins for characterized neuronal subpopulations (PubMed:11906216). Isoform 2: Minor isoform expressed in the brain, in the granule cell layer of the cerebellum, at low level. Not developmentally regulated (PubMed:11906216). Isoform 3: Minor isoform expressed in the brain, in the granule cell layer (PubMed:11906216). of the cerebellum, at low level. Not developmentally regulated.</text>
</comment>
<comment type="developmental stage">
    <text>Its expression is regulated differentially in retinal cell types during development.</text>
</comment>
<comment type="domain">
    <text evidence="1">EF-1 binds magnesium constitutively under physiological conditions, EF-3 and EF-4 bind calcium cooperatively and EF-2 binds neither calcium nor magnesium.</text>
</comment>
<comment type="PTM">
    <text evidence="1">Phosphorylated. The phosphorylation regulates the activity (By similarity).</text>
</comment>
<comment type="miscellaneous">
    <molecule>Isoform 1</molecule>
    <text>Major isoform expressed in the brain.</text>
</comment>
<sequence>MSSHIAKSESKTSLLKAAAASGGSRAPRHSSARDPGLRGRRLPGPCPDSPATCGDPSSRRPLCRPVPRDEGARGSRRGLPQAHCRPRETLPPARGRDGEERGLAPALSLRGSLRSRGRGDPAPAGTPEADPFLHQLRPMLSSAFGQDRSLRPEEIEELREAFREFDKDKDGYINCRDLGNCMRTMGYMPTEMELIELSQQINMNLGGHVDFDDFVELMGPKLLAETADMIGVKELRDAFREFDTNGDGEISTSELREAMRKLLGHQVGHRDIEEIIRDVDLNGDGRVDFEEFVRMMSR</sequence>
<reference key="1">
    <citation type="journal article" date="1998" name="J. Biol. Chem.">
        <title>Caldendrin, a novel neuronal calcium-binding protein confined to the somato-dendritic compartment.</title>
        <authorList>
            <person name="Seidenbecher C.I."/>
            <person name="Langnaese K."/>
            <person name="Sanmarti-Vila L."/>
            <person name="Boeckers T.M."/>
            <person name="Smalla K.-H."/>
            <person name="Sabel B.A."/>
            <person name="Garner C.C."/>
            <person name="Gundelfinger E.D."/>
            <person name="Kreutz M.R."/>
        </authorList>
    </citation>
    <scope>NUCLEOTIDE SEQUENCE [MRNA] (ISOFORM 1)</scope>
    <scope>PHOSPHORYLATION</scope>
    <source>
        <strain>Sprague-Dawley</strain>
    </source>
</reference>
<reference key="2">
    <citation type="journal article" date="2002" name="Mol. Cell. Neurosci.">
        <title>The neuron-specific Ca2+-binding protein caldendrin: gene structure, splice isoforms, and expression in the rat central nervous system.</title>
        <authorList>
            <person name="Laube G."/>
            <person name="Seidenbecher C.I."/>
            <person name="Richter K."/>
            <person name="Dieterich D.C."/>
            <person name="Hoffmann B."/>
            <person name="Landwehr M."/>
            <person name="Smalla K.H."/>
            <person name="Winter C."/>
            <person name="Boeckers T.M."/>
            <person name="Wolf G."/>
            <person name="Gundelfinger E.D."/>
            <person name="Kreutz M.R."/>
        </authorList>
    </citation>
    <scope>NUCLEOTIDE SEQUENCE [MRNA] (ISOFORMS 2 AND 3)</scope>
    <scope>TISSUE SPECIFICITY</scope>
    <source>
        <tissue>Brain</tissue>
    </source>
</reference>
<reference key="3">
    <citation type="submission" date="2002-01" db="EMBL/GenBank/DDBJ databases">
        <authorList>
            <person name="Seidenbecher C.I."/>
        </authorList>
    </citation>
    <scope>SEQUENCE REVISION TO 290-291</scope>
</reference>
<reference key="4">
    <citation type="journal article" date="2002" name="Proc. Natl. Acad. Sci. U.S.A.">
        <title>Identification of a family of calcium sensors as protein ligands of inositol trisphosphate receptor Ca(2+) release channels.</title>
        <authorList>
            <person name="Yang J."/>
            <person name="McBride S."/>
            <person name="Mak D.-O.D."/>
            <person name="Vardi N."/>
            <person name="Palczewski K."/>
            <person name="Haeseleer F."/>
            <person name="Foskett J.K."/>
        </authorList>
    </citation>
    <scope>INTERACTION WITH ITPR1; ITPR2 AND ITPR3</scope>
</reference>
<reference key="5">
    <citation type="journal article" date="2002" name="Nat. Neurosci.">
        <title>Differential modulation of Ca(v)2.1 channels by calmodulin and Ca2+-binding protein 1.</title>
        <authorList>
            <person name="Lee A."/>
            <person name="Westenbroek R.E."/>
            <person name="Haeseleer F."/>
            <person name="Palczewski K."/>
            <person name="Scheuer T."/>
            <person name="Catterall W.A."/>
        </authorList>
    </citation>
    <scope>FUNCTION</scope>
    <scope>INTERACTION WITH CACNA1A</scope>
</reference>
<reference key="6">
    <citation type="journal article" date="2004" name="J. Mol. Biol.">
        <title>Caldendrin but not calmodulin binds to light chain 3 of MAP1A/B: an association with the microtubule cytoskeleton highlighting exclusive binding partners for neuronal Ca(2+)-sensor proteins.</title>
        <authorList>
            <person name="Seidenbecher C.I."/>
            <person name="Landwehr M."/>
            <person name="Smalla K.H."/>
            <person name="Kreutz M."/>
            <person name="Dieterich D.C."/>
            <person name="Zuschratter W."/>
            <person name="Reissner C."/>
            <person name="Hammarback J.A."/>
            <person name="Bockers T.M."/>
            <person name="Gundelfinger E.D."/>
            <person name="Kreutz M.R."/>
        </authorList>
    </citation>
    <scope>INTERACTION WITH MAP1LC3B</scope>
    <scope>SUBCELLULAR LOCATION</scope>
</reference>
<reference key="7">
    <citation type="journal article" date="2008" name="PLoS Biol.">
        <title>Caldendrin-Jacob: a protein liaison that couples NMDA receptor signalling to the nucleus.</title>
        <authorList>
            <person name="Dieterich D.C."/>
            <person name="Karpova A."/>
            <person name="Mikhaylova M."/>
            <person name="Zdobnova I."/>
            <person name="Konig I."/>
            <person name="Landwehr M."/>
            <person name="Kreutz M."/>
            <person name="Smalla K.H."/>
            <person name="Richter K."/>
            <person name="Landgraf P."/>
            <person name="Reissner C."/>
            <person name="Boeckers T.M."/>
            <person name="Zuschratter W."/>
            <person name="Spilker C."/>
            <person name="Seidenbecher C.I."/>
            <person name="Garner C.C."/>
            <person name="Gundelfinger E.D."/>
            <person name="Kreutz M.R."/>
        </authorList>
    </citation>
    <scope>INTERACTION WITH NSMF</scope>
</reference>
<organism>
    <name type="scientific">Rattus norvegicus</name>
    <name type="common">Rat</name>
    <dbReference type="NCBI Taxonomy" id="10116"/>
    <lineage>
        <taxon>Eukaryota</taxon>
        <taxon>Metazoa</taxon>
        <taxon>Chordata</taxon>
        <taxon>Craniata</taxon>
        <taxon>Vertebrata</taxon>
        <taxon>Euteleostomi</taxon>
        <taxon>Mammalia</taxon>
        <taxon>Eutheria</taxon>
        <taxon>Euarchontoglires</taxon>
        <taxon>Glires</taxon>
        <taxon>Rodentia</taxon>
        <taxon>Myomorpha</taxon>
        <taxon>Muroidea</taxon>
        <taxon>Muridae</taxon>
        <taxon>Murinae</taxon>
        <taxon>Rattus</taxon>
    </lineage>
</organism>
<keyword id="KW-0025">Alternative splicing</keyword>
<keyword id="KW-0106">Calcium</keyword>
<keyword id="KW-0963">Cytoplasm</keyword>
<keyword id="KW-0206">Cytoskeleton</keyword>
<keyword id="KW-0217">Developmental protein</keyword>
<keyword id="KW-0479">Metal-binding</keyword>
<keyword id="KW-0597">Phosphoprotein</keyword>
<keyword id="KW-1185">Reference proteome</keyword>
<keyword id="KW-0677">Repeat</keyword>
<keyword id="KW-0716">Sensory transduction</keyword>
<keyword id="KW-0844">Vision</keyword>
<protein>
    <recommendedName>
        <fullName>Calcium-binding protein 1</fullName>
        <shortName>CaBP1</shortName>
    </recommendedName>
    <alternativeName>
        <fullName>Caldendrin</fullName>
    </alternativeName>
</protein>
<name>CABP1_RAT</name>
<proteinExistence type="evidence at protein level"/>
<feature type="chain" id="PRO_0000073515" description="Calcium-binding protein 1">
    <location>
        <begin position="1"/>
        <end position="298"/>
    </location>
</feature>
<feature type="domain" description="EF-hand 1" evidence="4">
    <location>
        <begin position="153"/>
        <end position="188"/>
    </location>
</feature>
<feature type="domain" description="EF-hand 2" evidence="4">
    <location>
        <begin position="207"/>
        <end position="224"/>
    </location>
</feature>
<feature type="domain" description="EF-hand 3" evidence="4">
    <location>
        <begin position="230"/>
        <end position="265"/>
    </location>
</feature>
<feature type="domain" description="EF-hand 4" evidence="4">
    <location>
        <begin position="267"/>
        <end position="298"/>
    </location>
</feature>
<feature type="region of interest" description="Disordered" evidence="5">
    <location>
        <begin position="1"/>
        <end position="131"/>
    </location>
</feature>
<feature type="compositionally biased region" description="Basic and acidic residues" evidence="5">
    <location>
        <begin position="1"/>
        <end position="10"/>
    </location>
</feature>
<feature type="compositionally biased region" description="Low complexity" evidence="5">
    <location>
        <begin position="11"/>
        <end position="25"/>
    </location>
</feature>
<feature type="binding site" evidence="4">
    <location>
        <position position="166"/>
    </location>
    <ligand>
        <name>Ca(2+)</name>
        <dbReference type="ChEBI" id="CHEBI:29108"/>
        <label>1</label>
    </ligand>
</feature>
<feature type="binding site" evidence="4">
    <location>
        <position position="168"/>
    </location>
    <ligand>
        <name>Ca(2+)</name>
        <dbReference type="ChEBI" id="CHEBI:29108"/>
        <label>1</label>
    </ligand>
</feature>
<feature type="binding site" evidence="4">
    <location>
        <position position="170"/>
    </location>
    <ligand>
        <name>Ca(2+)</name>
        <dbReference type="ChEBI" id="CHEBI:29108"/>
        <label>1</label>
    </ligand>
</feature>
<feature type="binding site" evidence="4">
    <location>
        <position position="172"/>
    </location>
    <ligand>
        <name>Ca(2+)</name>
        <dbReference type="ChEBI" id="CHEBI:29108"/>
        <label>1</label>
    </ligand>
</feature>
<feature type="binding site" evidence="4">
    <location>
        <position position="177"/>
    </location>
    <ligand>
        <name>Ca(2+)</name>
        <dbReference type="ChEBI" id="CHEBI:29108"/>
        <label>1</label>
    </ligand>
</feature>
<feature type="binding site" evidence="4">
    <location>
        <position position="243"/>
    </location>
    <ligand>
        <name>Ca(2+)</name>
        <dbReference type="ChEBI" id="CHEBI:29108"/>
        <label>2</label>
    </ligand>
</feature>
<feature type="binding site" evidence="4">
    <location>
        <position position="245"/>
    </location>
    <ligand>
        <name>Ca(2+)</name>
        <dbReference type="ChEBI" id="CHEBI:29108"/>
        <label>2</label>
    </ligand>
</feature>
<feature type="binding site" evidence="4">
    <location>
        <position position="247"/>
    </location>
    <ligand>
        <name>Ca(2+)</name>
        <dbReference type="ChEBI" id="CHEBI:29108"/>
        <label>2</label>
    </ligand>
</feature>
<feature type="binding site" evidence="4">
    <location>
        <position position="249"/>
    </location>
    <ligand>
        <name>Ca(2+)</name>
        <dbReference type="ChEBI" id="CHEBI:29108"/>
        <label>2</label>
    </ligand>
</feature>
<feature type="binding site" evidence="4">
    <location>
        <position position="254"/>
    </location>
    <ligand>
        <name>Ca(2+)</name>
        <dbReference type="ChEBI" id="CHEBI:29108"/>
        <label>2</label>
    </ligand>
</feature>
<feature type="binding site" evidence="4">
    <location>
        <position position="280"/>
    </location>
    <ligand>
        <name>Ca(2+)</name>
        <dbReference type="ChEBI" id="CHEBI:29108"/>
        <label>3</label>
    </ligand>
</feature>
<feature type="binding site" evidence="4">
    <location>
        <position position="282"/>
    </location>
    <ligand>
        <name>Ca(2+)</name>
        <dbReference type="ChEBI" id="CHEBI:29108"/>
        <label>3</label>
    </ligand>
</feature>
<feature type="binding site" evidence="4">
    <location>
        <position position="284"/>
    </location>
    <ligand>
        <name>Ca(2+)</name>
        <dbReference type="ChEBI" id="CHEBI:29108"/>
        <label>3</label>
    </ligand>
</feature>
<feature type="binding site" evidence="4">
    <location>
        <position position="286"/>
    </location>
    <ligand>
        <name>Ca(2+)</name>
        <dbReference type="ChEBI" id="CHEBI:29108"/>
        <label>3</label>
    </ligand>
</feature>
<feature type="binding site" evidence="4">
    <location>
        <position position="291"/>
    </location>
    <ligand>
        <name>Ca(2+)</name>
        <dbReference type="ChEBI" id="CHEBI:29108"/>
        <label>3</label>
    </ligand>
</feature>
<feature type="modified residue" description="Phosphoserine" evidence="3">
    <location>
        <position position="251"/>
    </location>
</feature>
<feature type="splice variant" id="VSP_026157" description="In isoform 2." evidence="10">
    <original>MSSHIAKSESKTSLLKAAAASGGSRAPRHSSARDPGLRGRRLPGPCPDSPATCGDPSSRRPLCRPVPRDEGARGSRRGLPQAHCRPRETLPPARGRDGEERGLAPALSLRGSLRSRGRGDPAPAGTPEADPFLHQLRPMLSSAFGQ</original>
    <variation>MGNCVKSPLRNLSRK</variation>
    <location>
        <begin position="1"/>
        <end position="146"/>
    </location>
</feature>
<feature type="splice variant" id="VSP_026158" description="In isoform 3." evidence="10">
    <original>MSSHIAKSESKTSLLKAAAASGGSRAPRHSSARDPGLRGRRLPGPCPDSPATCGDPSSRRPLCRPVPRDEGARGSRRGLPQAHCRPRETLPPARGRDGEERGLAPALSLRGSLRSRGRGDPAPAGTPEADPFLHQLRPMLSSAFGQ</original>
    <variation>MGNCVKSPLRNLSRKMRQEEKTSYMAVQTSEDGLADGGELPGPLMMLAQNCAVMHNLLGPACIFLRKGFAENRQP</variation>
    <location>
        <begin position="1"/>
        <end position="146"/>
    </location>
</feature>
<feature type="initiator methionine" description="Removed" evidence="11">
    <location sequence="O88751-2">
        <position position="1"/>
    </location>
</feature>
<feature type="lipid moiety-binding region" description="N-myristoyl glycine" evidence="11">
    <location sequence="O88751-2">
        <position position="2"/>
    </location>
</feature>
<feature type="lipid moiety-binding region" description="S-palmitoyl cysteine" evidence="11">
    <location sequence="O88751-2">
        <position position="4"/>
    </location>
</feature>
<feature type="initiator methionine" description="Removed" evidence="11">
    <location sequence="O88751-3">
        <position position="1"/>
    </location>
</feature>
<feature type="lipid moiety-binding region" description="N-myristoyl glycine" evidence="11">
    <location sequence="O88751-3">
        <position position="2"/>
    </location>
</feature>
<feature type="lipid moiety-binding region" description="S-palmitoyl cysteine" evidence="11">
    <location sequence="O88751-3">
        <position position="4"/>
    </location>
</feature>
<accession>O88751</accession>
<accession>Q711K8</accession>
<accession>Q91WZ7</accession>
<dbReference type="EMBL" id="Y17048">
    <property type="protein sequence ID" value="CAD20347.1"/>
    <property type="molecule type" value="mRNA"/>
</dbReference>
<dbReference type="EMBL" id="AJ315761">
    <property type="protein sequence ID" value="CAC43037.1"/>
    <property type="molecule type" value="mRNA"/>
</dbReference>
<dbReference type="EMBL" id="AJ315657">
    <property type="protein sequence ID" value="CAC42417.1"/>
    <property type="molecule type" value="mRNA"/>
</dbReference>
<dbReference type="RefSeq" id="NP_001028847.1">
    <molecule id="O88751-2"/>
    <property type="nucleotide sequence ID" value="NM_001033675.1"/>
</dbReference>
<dbReference type="RefSeq" id="NP_001028848.1">
    <property type="nucleotide sequence ID" value="NM_001033676.1"/>
</dbReference>
<dbReference type="RefSeq" id="NP_598213.1">
    <molecule id="O88751-3"/>
    <property type="nucleotide sequence ID" value="NM_133529.2"/>
</dbReference>
<dbReference type="BMRB" id="O88751"/>
<dbReference type="SMR" id="O88751"/>
<dbReference type="CORUM" id="O88751"/>
<dbReference type="FunCoup" id="O88751">
    <property type="interactions" value="585"/>
</dbReference>
<dbReference type="IntAct" id="O88751">
    <property type="interactions" value="3"/>
</dbReference>
<dbReference type="STRING" id="10116.ENSRNOP00000001551"/>
<dbReference type="PhosphoSitePlus" id="O88751"/>
<dbReference type="PaxDb" id="10116-ENSRNOP00000001551"/>
<dbReference type="Ensembl" id="ENSRNOT00000001552.8">
    <molecule id="O88751-3"/>
    <property type="protein sequence ID" value="ENSRNOP00000001552.3"/>
    <property type="gene ID" value="ENSRNOG00000001173.9"/>
</dbReference>
<dbReference type="Ensembl" id="ENSRNOT00000039281.5">
    <molecule id="O88751-2"/>
    <property type="protein sequence ID" value="ENSRNOP00000033685.3"/>
    <property type="gene ID" value="ENSRNOG00000001173.9"/>
</dbReference>
<dbReference type="GeneID" id="171051"/>
<dbReference type="KEGG" id="rno:171051"/>
<dbReference type="UCSC" id="RGD:620385">
    <molecule id="O88751-1"/>
    <property type="organism name" value="rat"/>
</dbReference>
<dbReference type="AGR" id="RGD:620385"/>
<dbReference type="CTD" id="9478"/>
<dbReference type="RGD" id="620385">
    <property type="gene designation" value="Cabp1"/>
</dbReference>
<dbReference type="VEuPathDB" id="HostDB:ENSRNOG00000001173"/>
<dbReference type="eggNOG" id="KOG0027">
    <property type="taxonomic scope" value="Eukaryota"/>
</dbReference>
<dbReference type="GeneTree" id="ENSGT00940000158555"/>
<dbReference type="HOGENOM" id="CLU_061288_8_0_1"/>
<dbReference type="InParanoid" id="O88751"/>
<dbReference type="OrthoDB" id="26525at2759"/>
<dbReference type="PhylomeDB" id="O88751"/>
<dbReference type="PRO" id="PR:O88751"/>
<dbReference type="Proteomes" id="UP000002494">
    <property type="component" value="Chromosome 12"/>
</dbReference>
<dbReference type="Bgee" id="ENSRNOG00000001173">
    <property type="expression patterns" value="Expressed in frontal cortex and 20 other cell types or tissues"/>
</dbReference>
<dbReference type="ExpressionAtlas" id="O88751">
    <property type="expression patterns" value="baseline and differential"/>
</dbReference>
<dbReference type="GO" id="GO:0030424">
    <property type="term" value="C:axon"/>
    <property type="evidence" value="ECO:0000314"/>
    <property type="project" value="RGD"/>
</dbReference>
<dbReference type="GO" id="GO:0005737">
    <property type="term" value="C:cytoplasm"/>
    <property type="evidence" value="ECO:0000314"/>
    <property type="project" value="UniProtKB"/>
</dbReference>
<dbReference type="GO" id="GO:0005856">
    <property type="term" value="C:cytoskeleton"/>
    <property type="evidence" value="ECO:0007669"/>
    <property type="project" value="UniProtKB-SubCell"/>
</dbReference>
<dbReference type="GO" id="GO:0030425">
    <property type="term" value="C:dendrite"/>
    <property type="evidence" value="ECO:0000314"/>
    <property type="project" value="UniProtKB"/>
</dbReference>
<dbReference type="GO" id="GO:0098978">
    <property type="term" value="C:glutamatergic synapse"/>
    <property type="evidence" value="ECO:0000314"/>
    <property type="project" value="SynGO"/>
</dbReference>
<dbReference type="GO" id="GO:0000139">
    <property type="term" value="C:Golgi membrane"/>
    <property type="evidence" value="ECO:0000266"/>
    <property type="project" value="RGD"/>
</dbReference>
<dbReference type="GO" id="GO:0043025">
    <property type="term" value="C:neuronal cell body"/>
    <property type="evidence" value="ECO:0000314"/>
    <property type="project" value="UniProtKB"/>
</dbReference>
<dbReference type="GO" id="GO:0005634">
    <property type="term" value="C:nucleus"/>
    <property type="evidence" value="ECO:0000314"/>
    <property type="project" value="UniProtKB"/>
</dbReference>
<dbReference type="GO" id="GO:0048471">
    <property type="term" value="C:perinuclear region of cytoplasm"/>
    <property type="evidence" value="ECO:0000314"/>
    <property type="project" value="RGD"/>
</dbReference>
<dbReference type="GO" id="GO:0005886">
    <property type="term" value="C:plasma membrane"/>
    <property type="evidence" value="ECO:0000266"/>
    <property type="project" value="RGD"/>
</dbReference>
<dbReference type="GO" id="GO:0014069">
    <property type="term" value="C:postsynaptic density"/>
    <property type="evidence" value="ECO:0000314"/>
    <property type="project" value="UniProtKB"/>
</dbReference>
<dbReference type="GO" id="GO:0099092">
    <property type="term" value="C:postsynaptic density, intracellular component"/>
    <property type="evidence" value="ECO:0000314"/>
    <property type="project" value="SynGO"/>
</dbReference>
<dbReference type="GO" id="GO:0032991">
    <property type="term" value="C:protein-containing complex"/>
    <property type="evidence" value="ECO:0000314"/>
    <property type="project" value="RGD"/>
</dbReference>
<dbReference type="GO" id="GO:0030141">
    <property type="term" value="C:secretory granule"/>
    <property type="evidence" value="ECO:0000314"/>
    <property type="project" value="RGD"/>
</dbReference>
<dbReference type="GO" id="GO:0044280">
    <property type="term" value="C:subplasmalemmal coating"/>
    <property type="evidence" value="ECO:0000314"/>
    <property type="project" value="RGD"/>
</dbReference>
<dbReference type="GO" id="GO:0005246">
    <property type="term" value="F:calcium channel regulator activity"/>
    <property type="evidence" value="ECO:0000318"/>
    <property type="project" value="GO_Central"/>
</dbReference>
<dbReference type="GO" id="GO:0005509">
    <property type="term" value="F:calcium ion binding"/>
    <property type="evidence" value="ECO:0000314"/>
    <property type="project" value="RGD"/>
</dbReference>
<dbReference type="GO" id="GO:0048306">
    <property type="term" value="F:calcium-dependent protein binding"/>
    <property type="evidence" value="ECO:0000314"/>
    <property type="project" value="UniProtKB"/>
</dbReference>
<dbReference type="GO" id="GO:0042802">
    <property type="term" value="F:identical protein binding"/>
    <property type="evidence" value="ECO:0000353"/>
    <property type="project" value="RGD"/>
</dbReference>
<dbReference type="GO" id="GO:0008139">
    <property type="term" value="F:nuclear localization sequence binding"/>
    <property type="evidence" value="ECO:0000314"/>
    <property type="project" value="UniProtKB"/>
</dbReference>
<dbReference type="GO" id="GO:0019904">
    <property type="term" value="F:protein domain specific binding"/>
    <property type="evidence" value="ECO:0000353"/>
    <property type="project" value="RGD"/>
</dbReference>
<dbReference type="GO" id="GO:0044325">
    <property type="term" value="F:transmembrane transporter binding"/>
    <property type="evidence" value="ECO:0000353"/>
    <property type="project" value="RGD"/>
</dbReference>
<dbReference type="GO" id="GO:0031800">
    <property type="term" value="F:type 3 metabotropic glutamate receptor binding"/>
    <property type="evidence" value="ECO:0000353"/>
    <property type="project" value="RGD"/>
</dbReference>
<dbReference type="GO" id="GO:0098885">
    <property type="term" value="P:modification of postsynaptic actin cytoskeleton"/>
    <property type="evidence" value="ECO:0000266"/>
    <property type="project" value="RGD"/>
</dbReference>
<dbReference type="GO" id="GO:0010651">
    <property type="term" value="P:negative regulation of cell communication by electrical coupling"/>
    <property type="evidence" value="ECO:0000314"/>
    <property type="project" value="RGD"/>
</dbReference>
<dbReference type="GO" id="GO:0042308">
    <property type="term" value="P:negative regulation of protein import into nucleus"/>
    <property type="evidence" value="ECO:0000315"/>
    <property type="project" value="UniProtKB"/>
</dbReference>
<dbReference type="GO" id="GO:0099527">
    <property type="term" value="P:postsynapse to nucleus signaling pathway"/>
    <property type="evidence" value="ECO:0000314"/>
    <property type="project" value="SynGO"/>
</dbReference>
<dbReference type="GO" id="GO:0048167">
    <property type="term" value="P:regulation of synaptic plasticity"/>
    <property type="evidence" value="ECO:0000303"/>
    <property type="project" value="RGD"/>
</dbReference>
<dbReference type="GO" id="GO:0007601">
    <property type="term" value="P:visual perception"/>
    <property type="evidence" value="ECO:0000250"/>
    <property type="project" value="UniProtKB"/>
</dbReference>
<dbReference type="CDD" id="cd00051">
    <property type="entry name" value="EFh"/>
    <property type="match status" value="1"/>
</dbReference>
<dbReference type="FunFam" id="1.10.238.10:FF:000069">
    <property type="entry name" value="calcium-binding protein 1 isoform X1"/>
    <property type="match status" value="1"/>
</dbReference>
<dbReference type="FunFam" id="1.10.238.10:FF:000037">
    <property type="entry name" value="calcium-binding protein 1 isoform X2"/>
    <property type="match status" value="1"/>
</dbReference>
<dbReference type="Gene3D" id="1.10.238.10">
    <property type="entry name" value="EF-hand"/>
    <property type="match status" value="2"/>
</dbReference>
<dbReference type="InterPro" id="IPR043582">
    <property type="entry name" value="CaBP1/2/4/5"/>
</dbReference>
<dbReference type="InterPro" id="IPR011992">
    <property type="entry name" value="EF-hand-dom_pair"/>
</dbReference>
<dbReference type="InterPro" id="IPR018247">
    <property type="entry name" value="EF_Hand_1_Ca_BS"/>
</dbReference>
<dbReference type="InterPro" id="IPR002048">
    <property type="entry name" value="EF_hand_dom"/>
</dbReference>
<dbReference type="PANTHER" id="PTHR45917:SF1">
    <property type="entry name" value="CALCIUM-BINDING PROTEIN 1"/>
    <property type="match status" value="1"/>
</dbReference>
<dbReference type="PANTHER" id="PTHR45917">
    <property type="entry name" value="CALCIUM-BINDING PROTEIN 1-RELATED"/>
    <property type="match status" value="1"/>
</dbReference>
<dbReference type="Pfam" id="PF13499">
    <property type="entry name" value="EF-hand_7"/>
    <property type="match status" value="2"/>
</dbReference>
<dbReference type="SMART" id="SM00054">
    <property type="entry name" value="EFh"/>
    <property type="match status" value="3"/>
</dbReference>
<dbReference type="SUPFAM" id="SSF47473">
    <property type="entry name" value="EF-hand"/>
    <property type="match status" value="1"/>
</dbReference>
<dbReference type="PROSITE" id="PS00018">
    <property type="entry name" value="EF_HAND_1"/>
    <property type="match status" value="3"/>
</dbReference>
<dbReference type="PROSITE" id="PS50222">
    <property type="entry name" value="EF_HAND_2"/>
    <property type="match status" value="4"/>
</dbReference>
<gene>
    <name type="primary">Cabp1</name>
</gene>
<evidence type="ECO:0000250" key="1"/>
<evidence type="ECO:0000250" key="2">
    <source>
        <dbReference type="UniProtKB" id="Q9JLK7"/>
    </source>
</evidence>
<evidence type="ECO:0000250" key="3">
    <source>
        <dbReference type="UniProtKB" id="Q9NZU7"/>
    </source>
</evidence>
<evidence type="ECO:0000255" key="4">
    <source>
        <dbReference type="PROSITE-ProRule" id="PRU00448"/>
    </source>
</evidence>
<evidence type="ECO:0000256" key="5">
    <source>
        <dbReference type="SAM" id="MobiDB-lite"/>
    </source>
</evidence>
<evidence type="ECO:0000269" key="6">
    <source>
    </source>
</evidence>
<evidence type="ECO:0000269" key="7">
    <source>
    </source>
</evidence>
<evidence type="ECO:0000269" key="8">
    <source>
    </source>
</evidence>
<evidence type="ECO:0000269" key="9">
    <source>
    </source>
</evidence>
<evidence type="ECO:0000303" key="10">
    <source>
    </source>
</evidence>
<evidence type="ECO:0000305" key="11"/>